<name>GCSP_SALA4</name>
<reference key="1">
    <citation type="journal article" date="2011" name="J. Bacteriol.">
        <title>Comparative genomics of 28 Salmonella enterica isolates: evidence for CRISPR-mediated adaptive sublineage evolution.</title>
        <authorList>
            <person name="Fricke W.F."/>
            <person name="Mammel M.K."/>
            <person name="McDermott P.F."/>
            <person name="Tartera C."/>
            <person name="White D.G."/>
            <person name="Leclerc J.E."/>
            <person name="Ravel J."/>
            <person name="Cebula T.A."/>
        </authorList>
    </citation>
    <scope>NUCLEOTIDE SEQUENCE [LARGE SCALE GENOMIC DNA]</scope>
    <source>
        <strain>SL483</strain>
    </source>
</reference>
<evidence type="ECO:0000255" key="1">
    <source>
        <dbReference type="HAMAP-Rule" id="MF_00711"/>
    </source>
</evidence>
<organism>
    <name type="scientific">Salmonella agona (strain SL483)</name>
    <dbReference type="NCBI Taxonomy" id="454166"/>
    <lineage>
        <taxon>Bacteria</taxon>
        <taxon>Pseudomonadati</taxon>
        <taxon>Pseudomonadota</taxon>
        <taxon>Gammaproteobacteria</taxon>
        <taxon>Enterobacterales</taxon>
        <taxon>Enterobacteriaceae</taxon>
        <taxon>Salmonella</taxon>
    </lineage>
</organism>
<dbReference type="EC" id="1.4.4.2" evidence="1"/>
<dbReference type="EMBL" id="CP001138">
    <property type="protein sequence ID" value="ACH50857.1"/>
    <property type="molecule type" value="Genomic_DNA"/>
</dbReference>
<dbReference type="RefSeq" id="WP_000194965.1">
    <property type="nucleotide sequence ID" value="NC_011149.1"/>
</dbReference>
<dbReference type="SMR" id="B5F5H7"/>
<dbReference type="KEGG" id="sea:SeAg_B3210"/>
<dbReference type="HOGENOM" id="CLU_004620_3_2_6"/>
<dbReference type="Proteomes" id="UP000008819">
    <property type="component" value="Chromosome"/>
</dbReference>
<dbReference type="GO" id="GO:0005829">
    <property type="term" value="C:cytosol"/>
    <property type="evidence" value="ECO:0007669"/>
    <property type="project" value="TreeGrafter"/>
</dbReference>
<dbReference type="GO" id="GO:0005960">
    <property type="term" value="C:glycine cleavage complex"/>
    <property type="evidence" value="ECO:0007669"/>
    <property type="project" value="TreeGrafter"/>
</dbReference>
<dbReference type="GO" id="GO:0016594">
    <property type="term" value="F:glycine binding"/>
    <property type="evidence" value="ECO:0007669"/>
    <property type="project" value="TreeGrafter"/>
</dbReference>
<dbReference type="GO" id="GO:0004375">
    <property type="term" value="F:glycine dehydrogenase (decarboxylating) activity"/>
    <property type="evidence" value="ECO:0007669"/>
    <property type="project" value="UniProtKB-EC"/>
</dbReference>
<dbReference type="GO" id="GO:0030170">
    <property type="term" value="F:pyridoxal phosphate binding"/>
    <property type="evidence" value="ECO:0007669"/>
    <property type="project" value="TreeGrafter"/>
</dbReference>
<dbReference type="GO" id="GO:0019464">
    <property type="term" value="P:glycine decarboxylation via glycine cleavage system"/>
    <property type="evidence" value="ECO:0007669"/>
    <property type="project" value="UniProtKB-UniRule"/>
</dbReference>
<dbReference type="CDD" id="cd00613">
    <property type="entry name" value="GDC-P"/>
    <property type="match status" value="2"/>
</dbReference>
<dbReference type="FunFam" id="3.40.640.10:FF:000005">
    <property type="entry name" value="Glycine dehydrogenase (decarboxylating), mitochondrial"/>
    <property type="match status" value="1"/>
</dbReference>
<dbReference type="FunFam" id="3.90.1150.10:FF:000007">
    <property type="entry name" value="Glycine dehydrogenase (decarboxylating), mitochondrial"/>
    <property type="match status" value="1"/>
</dbReference>
<dbReference type="FunFam" id="3.40.640.10:FF:000007">
    <property type="entry name" value="glycine dehydrogenase (Decarboxylating), mitochondrial"/>
    <property type="match status" value="1"/>
</dbReference>
<dbReference type="Gene3D" id="3.90.1150.10">
    <property type="entry name" value="Aspartate Aminotransferase, domain 1"/>
    <property type="match status" value="1"/>
</dbReference>
<dbReference type="Gene3D" id="3.40.640.10">
    <property type="entry name" value="Type I PLP-dependent aspartate aminotransferase-like (Major domain)"/>
    <property type="match status" value="2"/>
</dbReference>
<dbReference type="HAMAP" id="MF_00711">
    <property type="entry name" value="GcvP"/>
    <property type="match status" value="1"/>
</dbReference>
<dbReference type="InterPro" id="IPR003437">
    <property type="entry name" value="GcvP"/>
</dbReference>
<dbReference type="InterPro" id="IPR049316">
    <property type="entry name" value="GDC-P_C"/>
</dbReference>
<dbReference type="InterPro" id="IPR049315">
    <property type="entry name" value="GDC-P_N"/>
</dbReference>
<dbReference type="InterPro" id="IPR020581">
    <property type="entry name" value="GDC_P"/>
</dbReference>
<dbReference type="InterPro" id="IPR015424">
    <property type="entry name" value="PyrdxlP-dep_Trfase"/>
</dbReference>
<dbReference type="InterPro" id="IPR015421">
    <property type="entry name" value="PyrdxlP-dep_Trfase_major"/>
</dbReference>
<dbReference type="InterPro" id="IPR015422">
    <property type="entry name" value="PyrdxlP-dep_Trfase_small"/>
</dbReference>
<dbReference type="NCBIfam" id="TIGR00461">
    <property type="entry name" value="gcvP"/>
    <property type="match status" value="1"/>
</dbReference>
<dbReference type="NCBIfam" id="NF003346">
    <property type="entry name" value="PRK04366.1"/>
    <property type="match status" value="1"/>
</dbReference>
<dbReference type="PANTHER" id="PTHR11773:SF13">
    <property type="entry name" value="GLYCINE DEHYDROGENASE (DECARBOXYLATING)"/>
    <property type="match status" value="1"/>
</dbReference>
<dbReference type="PANTHER" id="PTHR11773">
    <property type="entry name" value="GLYCINE DEHYDROGENASE, DECARBOXYLATING"/>
    <property type="match status" value="1"/>
</dbReference>
<dbReference type="Pfam" id="PF21478">
    <property type="entry name" value="GcvP2_C"/>
    <property type="match status" value="1"/>
</dbReference>
<dbReference type="Pfam" id="PF02347">
    <property type="entry name" value="GDC-P"/>
    <property type="match status" value="2"/>
</dbReference>
<dbReference type="SUPFAM" id="SSF53383">
    <property type="entry name" value="PLP-dependent transferases"/>
    <property type="match status" value="2"/>
</dbReference>
<sequence length="957" mass="104275">MTQTLSQLENRGAFIERHIGPDAAQQQEMLNAVGAESLNALTGQIVPKDIQLATPPQVGEAATEYAALAELKAIAGRNKRFTSYIGMGYTAVQLPPVILRNMLENPGWYTAYTPYQPEVSQGRLEALLNFQQVTLDLTGLDMASASLLDEATAAAEAMAMAKRVSKLKNANRFFVASDVHPQTLDVVRTRAETFGFDVIVDDAAKALDHQDVFGVLLQQVGSTGEIHDYSALISELKARKVIVSVAADFMALVLLTAPGKQGADIVFGSAQRFGVPMGYGGPHAAFFAAKDEFKRSMPGRIIGVSKDAAGNTALRMAMQTREQHIRREKANSNICTSQVLLANIASLYAVYHGPVGLKRIANRIHRLTDILAAGLQQKGLKLRHAHYFDTLCVEVADKAAVLARAEAAEINLRSDIHNAVGITLDETTTRENVAQLFNVLLGDSHGLNIETLDKDVALDSRSIQQSMLRDDAILTHPVFNRYHSETEMMRYMHSLERKDLALNQAMIPLGSCTMKLNAAAEMIPITWPEFAELHPFCPPEQAEGYHQMISQLSDWLVKLTGYDAVCMQPNSGAQGEYAGLLAIRHYHESRNEGHRDICLIPASAHGTNPASAHMAGMQVVVVACDKNGNIDLDDLRAKAEQHAANLSCIMVTYPSTHGVYEETIREVCEVVHQFGGQVYLDGANMNAQVGITSPGFIGADVSHLNLHKTFCIPHGGGGPGMGPIGVKAHLAPFVPGHSVVQIEGMLTRQGAVSAAPFGSASILPISWMYIRMMGAEGMKQASQVAILNANYIASRLKDAYPVLYTGRDGRVAHECILDIRPLKEETGISELDIAKRLIDYGFHAPTMSFPVAGTLMVEPTESEGKAELDRFIDAMLAIRAEIDQVKAGVWPLEDNPLVNAPHIQSELVAEWAHPYSREVAVFPAGVADKYWPTVKRLDDVYGDRNLFCSCVPISDYQ</sequence>
<proteinExistence type="inferred from homology"/>
<feature type="chain" id="PRO_1000132450" description="Glycine dehydrogenase (decarboxylating)">
    <location>
        <begin position="1"/>
        <end position="957"/>
    </location>
</feature>
<feature type="modified residue" description="N6-(pyridoxal phosphate)lysine" evidence="1">
    <location>
        <position position="708"/>
    </location>
</feature>
<protein>
    <recommendedName>
        <fullName evidence="1">Glycine dehydrogenase (decarboxylating)</fullName>
        <ecNumber evidence="1">1.4.4.2</ecNumber>
    </recommendedName>
    <alternativeName>
        <fullName evidence="1">Glycine cleavage system P-protein</fullName>
    </alternativeName>
    <alternativeName>
        <fullName evidence="1">Glycine decarboxylase</fullName>
    </alternativeName>
    <alternativeName>
        <fullName evidence="1">Glycine dehydrogenase (aminomethyl-transferring)</fullName>
    </alternativeName>
</protein>
<accession>B5F5H7</accession>
<gene>
    <name evidence="1" type="primary">gcvP</name>
    <name type="ordered locus">SeAg_B3210</name>
</gene>
<keyword id="KW-0560">Oxidoreductase</keyword>
<keyword id="KW-0663">Pyridoxal phosphate</keyword>
<comment type="function">
    <text evidence="1">The glycine cleavage system catalyzes the degradation of glycine. The P protein binds the alpha-amino group of glycine through its pyridoxal phosphate cofactor; CO(2) is released and the remaining methylamine moiety is then transferred to the lipoamide cofactor of the H protein.</text>
</comment>
<comment type="catalytic activity">
    <reaction evidence="1">
        <text>N(6)-[(R)-lipoyl]-L-lysyl-[glycine-cleavage complex H protein] + glycine + H(+) = N(6)-[(R)-S(8)-aminomethyldihydrolipoyl]-L-lysyl-[glycine-cleavage complex H protein] + CO2</text>
        <dbReference type="Rhea" id="RHEA:24304"/>
        <dbReference type="Rhea" id="RHEA-COMP:10494"/>
        <dbReference type="Rhea" id="RHEA-COMP:10495"/>
        <dbReference type="ChEBI" id="CHEBI:15378"/>
        <dbReference type="ChEBI" id="CHEBI:16526"/>
        <dbReference type="ChEBI" id="CHEBI:57305"/>
        <dbReference type="ChEBI" id="CHEBI:83099"/>
        <dbReference type="ChEBI" id="CHEBI:83143"/>
        <dbReference type="EC" id="1.4.4.2"/>
    </reaction>
</comment>
<comment type="cofactor">
    <cofactor evidence="1">
        <name>pyridoxal 5'-phosphate</name>
        <dbReference type="ChEBI" id="CHEBI:597326"/>
    </cofactor>
</comment>
<comment type="subunit">
    <text evidence="1">The glycine cleavage system is composed of four proteins: P, T, L and H.</text>
</comment>
<comment type="similarity">
    <text evidence="1">Belongs to the GcvP family.</text>
</comment>